<organism>
    <name type="scientific">Anthericum liliago</name>
    <name type="common">St-Bernard's lily</name>
    <dbReference type="NCBI Taxonomy" id="51434"/>
    <lineage>
        <taxon>Eukaryota</taxon>
        <taxon>Viridiplantae</taxon>
        <taxon>Streptophyta</taxon>
        <taxon>Embryophyta</taxon>
        <taxon>Tracheophyta</taxon>
        <taxon>Spermatophyta</taxon>
        <taxon>Magnoliopsida</taxon>
        <taxon>Liliopsida</taxon>
        <taxon>Asparagales</taxon>
        <taxon>Asparagaceae</taxon>
        <taxon>Agavoideae</taxon>
        <taxon>Anthericum</taxon>
    </lineage>
</organism>
<dbReference type="EMBL" id="AJ511426">
    <property type="protein sequence ID" value="CAD54570.2"/>
    <property type="molecule type" value="Genomic_DNA"/>
</dbReference>
<dbReference type="GO" id="GO:0009507">
    <property type="term" value="C:chloroplast"/>
    <property type="evidence" value="ECO:0007669"/>
    <property type="project" value="UniProtKB-SubCell"/>
</dbReference>
<dbReference type="GO" id="GO:0003723">
    <property type="term" value="F:RNA binding"/>
    <property type="evidence" value="ECO:0007669"/>
    <property type="project" value="UniProtKB-KW"/>
</dbReference>
<dbReference type="GO" id="GO:0006397">
    <property type="term" value="P:mRNA processing"/>
    <property type="evidence" value="ECO:0007669"/>
    <property type="project" value="UniProtKB-KW"/>
</dbReference>
<dbReference type="GO" id="GO:0008380">
    <property type="term" value="P:RNA splicing"/>
    <property type="evidence" value="ECO:0007669"/>
    <property type="project" value="UniProtKB-UniRule"/>
</dbReference>
<dbReference type="GO" id="GO:0008033">
    <property type="term" value="P:tRNA processing"/>
    <property type="evidence" value="ECO:0007669"/>
    <property type="project" value="UniProtKB-KW"/>
</dbReference>
<dbReference type="HAMAP" id="MF_01390">
    <property type="entry name" value="MatK"/>
    <property type="match status" value="1"/>
</dbReference>
<dbReference type="InterPro" id="IPR024937">
    <property type="entry name" value="Domain_X"/>
</dbReference>
<dbReference type="InterPro" id="IPR002866">
    <property type="entry name" value="Maturase_MatK"/>
</dbReference>
<dbReference type="InterPro" id="IPR024942">
    <property type="entry name" value="Maturase_MatK_N"/>
</dbReference>
<dbReference type="PANTHER" id="PTHR34811">
    <property type="entry name" value="MATURASE K"/>
    <property type="match status" value="1"/>
</dbReference>
<dbReference type="PANTHER" id="PTHR34811:SF1">
    <property type="entry name" value="MATURASE K"/>
    <property type="match status" value="1"/>
</dbReference>
<dbReference type="Pfam" id="PF01348">
    <property type="entry name" value="Intron_maturas2"/>
    <property type="match status" value="1"/>
</dbReference>
<dbReference type="Pfam" id="PF01824">
    <property type="entry name" value="MatK_N"/>
    <property type="match status" value="1"/>
</dbReference>
<feature type="chain" id="PRO_0000143238" description="Maturase K">
    <location>
        <begin position="1"/>
        <end position="521"/>
    </location>
</feature>
<accession>Q7YJG1</accession>
<reference key="1">
    <citation type="journal article" date="2003" name="Taxon">
        <title>Phylogenetic relationships in Asphodelaceae (subfamily Alooideae) inferred from chloroplast DNA sequences (rbcL, matK) and from genomic fingerprinting (ISSR).</title>
        <authorList>
            <person name="Treutlein J."/>
            <person name="Smith G.F."/>
            <person name="van Wyk B.-E."/>
            <person name="Wink M."/>
        </authorList>
    </citation>
    <scope>NUCLEOTIDE SEQUENCE [GENOMIC DNA]</scope>
</reference>
<geneLocation type="chloroplast"/>
<keyword id="KW-0150">Chloroplast</keyword>
<keyword id="KW-0507">mRNA processing</keyword>
<keyword id="KW-0934">Plastid</keyword>
<keyword id="KW-0694">RNA-binding</keyword>
<keyword id="KW-0819">tRNA processing</keyword>
<name>MATK_ANTLI</name>
<proteinExistence type="inferred from homology"/>
<evidence type="ECO:0000255" key="1">
    <source>
        <dbReference type="HAMAP-Rule" id="MF_01390"/>
    </source>
</evidence>
<sequence length="521" mass="62004">MEELQGYLEKDKSWQQHLLYPLLFQEYIYALAHDHSLSGSIFYEPVEVFGYDKKSSLALVKRLNTRIYQQNFLISSVNGSNQKRLVGXNNFFXSLFXSQMIIESFAIFXEILFLRALVSFFGEKKVLKYPNLPSIHSIFPFLEXKLPHLNYVSDILIPHPIHMXILVQILQCWIQDVPFLHSLRFFLHEYHNWNSLLITHKKSICLFSKENKRLFRFLYNSYVSEFEFLLVFFRKQSSYLRLRSSGTFLERTHFYGKIEHFQIXHFAFYSSMSXLFPVVXLKXPFMHYVRYQGKALLASKGTHLVMKKWKYHFVTLWQYYFHFWSQLYRIRINXLSNYSFYFLGYLSSVLINFSAVRNQMLENSFLIDIITKKFDSIIPVILLIESLSKAQFCTVSGHPISKPIWADLSDSDILDRFGWICRNLSHYHSGSSKKQDLYRIKYILRLSCARTLARKHKSTVRTFLRRLGPGLLEEFFTEEERVLSLIFPKTISFILHGSHKERIWYLDIIRMNDLVNYSXLX</sequence>
<protein>
    <recommendedName>
        <fullName evidence="1">Maturase K</fullName>
    </recommendedName>
    <alternativeName>
        <fullName evidence="1">Intron maturase</fullName>
    </alternativeName>
</protein>
<gene>
    <name evidence="1" type="primary">matK</name>
</gene>
<comment type="function">
    <text evidence="1">Usually encoded in the trnK tRNA gene intron. Probably assists in splicing its own and other chloroplast group II introns.</text>
</comment>
<comment type="subcellular location">
    <subcellularLocation>
        <location>Plastid</location>
        <location>Chloroplast</location>
    </subcellularLocation>
</comment>
<comment type="similarity">
    <text evidence="1">Belongs to the intron maturase 2 family. MatK subfamily.</text>
</comment>